<dbReference type="EMBL" id="BC023701">
    <property type="protein sequence ID" value="AAH23701.1"/>
    <property type="molecule type" value="mRNA"/>
</dbReference>
<dbReference type="EMBL" id="BC023827">
    <property type="protein sequence ID" value="AAH23827.1"/>
    <property type="molecule type" value="mRNA"/>
</dbReference>
<dbReference type="EMBL" id="BC070421">
    <property type="protein sequence ID" value="AAH70421.1"/>
    <property type="molecule type" value="mRNA"/>
</dbReference>
<dbReference type="CCDS" id="CCDS22408.1"/>
<dbReference type="RefSeq" id="NP_001001491.1">
    <property type="nucleotide sequence ID" value="NM_001001491.2"/>
</dbReference>
<dbReference type="SMR" id="Q6IRU2"/>
<dbReference type="BioGRID" id="236471">
    <property type="interactions" value="28"/>
</dbReference>
<dbReference type="FunCoup" id="Q6IRU2">
    <property type="interactions" value="290"/>
</dbReference>
<dbReference type="IntAct" id="Q6IRU2">
    <property type="interactions" value="13"/>
</dbReference>
<dbReference type="STRING" id="10090.ENSMUSP00000003575"/>
<dbReference type="GlyGen" id="Q6IRU2">
    <property type="glycosylation" value="1 site, 1 O-linked glycan (1 site)"/>
</dbReference>
<dbReference type="iPTMnet" id="Q6IRU2"/>
<dbReference type="PhosphoSitePlus" id="Q6IRU2"/>
<dbReference type="SwissPalm" id="Q6IRU2"/>
<dbReference type="jPOST" id="Q6IRU2"/>
<dbReference type="PaxDb" id="10090-ENSMUSP00000003575"/>
<dbReference type="PeptideAtlas" id="Q6IRU2"/>
<dbReference type="ProteomicsDB" id="260729"/>
<dbReference type="Pumba" id="Q6IRU2"/>
<dbReference type="Antibodypedia" id="27276">
    <property type="antibodies" value="170 antibodies from 28 providers"/>
</dbReference>
<dbReference type="DNASU" id="326618"/>
<dbReference type="Ensembl" id="ENSMUST00000003575.11">
    <property type="protein sequence ID" value="ENSMUSP00000003575.10"/>
    <property type="gene ID" value="ENSMUSG00000031799.11"/>
</dbReference>
<dbReference type="GeneID" id="326618"/>
<dbReference type="KEGG" id="mmu:326618"/>
<dbReference type="UCSC" id="uc009mfi.1">
    <property type="organism name" value="mouse"/>
</dbReference>
<dbReference type="AGR" id="MGI:2449202"/>
<dbReference type="CTD" id="7171"/>
<dbReference type="MGI" id="MGI:2449202">
    <property type="gene designation" value="Tpm4"/>
</dbReference>
<dbReference type="VEuPathDB" id="HostDB:ENSMUSG00000031799"/>
<dbReference type="eggNOG" id="KOG1003">
    <property type="taxonomic scope" value="Eukaryota"/>
</dbReference>
<dbReference type="GeneTree" id="ENSGT01030000234542"/>
<dbReference type="HOGENOM" id="CLU_055027_3_0_1"/>
<dbReference type="InParanoid" id="Q6IRU2"/>
<dbReference type="OMA" id="MFEHRNQ"/>
<dbReference type="OrthoDB" id="128924at2759"/>
<dbReference type="PhylomeDB" id="Q6IRU2"/>
<dbReference type="TreeFam" id="TF351519"/>
<dbReference type="Reactome" id="R-MMU-390522">
    <property type="pathway name" value="Striated Muscle Contraction"/>
</dbReference>
<dbReference type="Reactome" id="R-MMU-445355">
    <property type="pathway name" value="Smooth Muscle Contraction"/>
</dbReference>
<dbReference type="Reactome" id="R-MMU-9013424">
    <property type="pathway name" value="RHOV GTPase cycle"/>
</dbReference>
<dbReference type="BioGRID-ORCS" id="326618">
    <property type="hits" value="1 hit in 78 CRISPR screens"/>
</dbReference>
<dbReference type="ChiTaRS" id="Tpm4">
    <property type="organism name" value="mouse"/>
</dbReference>
<dbReference type="PRO" id="PR:Q6IRU2"/>
<dbReference type="Proteomes" id="UP000000589">
    <property type="component" value="Chromosome 8"/>
</dbReference>
<dbReference type="RNAct" id="Q6IRU2">
    <property type="molecule type" value="protein"/>
</dbReference>
<dbReference type="Bgee" id="ENSMUSG00000031799">
    <property type="expression patterns" value="Expressed in undifferentiated genital tubercle and 248 other cell types or tissues"/>
</dbReference>
<dbReference type="ExpressionAtlas" id="Q6IRU2">
    <property type="expression patterns" value="baseline and differential"/>
</dbReference>
<dbReference type="GO" id="GO:0015629">
    <property type="term" value="C:actin cytoskeleton"/>
    <property type="evidence" value="ECO:0000250"/>
    <property type="project" value="UniProtKB"/>
</dbReference>
<dbReference type="GO" id="GO:0030863">
    <property type="term" value="C:cortical cytoskeleton"/>
    <property type="evidence" value="ECO:0000314"/>
    <property type="project" value="MGI"/>
</dbReference>
<dbReference type="GO" id="GO:0005737">
    <property type="term" value="C:cytoplasm"/>
    <property type="evidence" value="ECO:0000314"/>
    <property type="project" value="MGI"/>
</dbReference>
<dbReference type="GO" id="GO:0002102">
    <property type="term" value="C:podosome"/>
    <property type="evidence" value="ECO:0000314"/>
    <property type="project" value="MGI"/>
</dbReference>
<dbReference type="GO" id="GO:0001725">
    <property type="term" value="C:stress fiber"/>
    <property type="evidence" value="ECO:0000266"/>
    <property type="project" value="MGI"/>
</dbReference>
<dbReference type="GO" id="GO:0051015">
    <property type="term" value="F:actin filament binding"/>
    <property type="evidence" value="ECO:0000314"/>
    <property type="project" value="MGI"/>
</dbReference>
<dbReference type="GO" id="GO:0042802">
    <property type="term" value="F:identical protein binding"/>
    <property type="evidence" value="ECO:0000250"/>
    <property type="project" value="UniProtKB"/>
</dbReference>
<dbReference type="GO" id="GO:0046872">
    <property type="term" value="F:metal ion binding"/>
    <property type="evidence" value="ECO:0007669"/>
    <property type="project" value="UniProtKB-KW"/>
</dbReference>
<dbReference type="GO" id="GO:0046982">
    <property type="term" value="F:protein heterodimerization activity"/>
    <property type="evidence" value="ECO:0000250"/>
    <property type="project" value="UniProtKB"/>
</dbReference>
<dbReference type="GO" id="GO:0042803">
    <property type="term" value="F:protein homodimerization activity"/>
    <property type="evidence" value="ECO:0000250"/>
    <property type="project" value="UniProtKB"/>
</dbReference>
<dbReference type="GO" id="GO:0030220">
    <property type="term" value="P:platelet formation"/>
    <property type="evidence" value="ECO:0000315"/>
    <property type="project" value="UniProtKB"/>
</dbReference>
<dbReference type="FunFam" id="1.20.5.170:FF:000001">
    <property type="entry name" value="Tropomyosin alpha-1 chain isoform 1"/>
    <property type="match status" value="1"/>
</dbReference>
<dbReference type="FunFam" id="1.20.5.340:FF:000001">
    <property type="entry name" value="Tropomyosin alpha-1 chain isoform 2"/>
    <property type="match status" value="1"/>
</dbReference>
<dbReference type="FunFam" id="1.20.5.370:FF:000004">
    <property type="entry name" value="tropomyosin alpha-1 chain isoform X1"/>
    <property type="match status" value="1"/>
</dbReference>
<dbReference type="Gene3D" id="1.20.5.170">
    <property type="match status" value="1"/>
</dbReference>
<dbReference type="Gene3D" id="1.20.5.370">
    <property type="match status" value="1"/>
</dbReference>
<dbReference type="InterPro" id="IPR000533">
    <property type="entry name" value="Tropomyosin"/>
</dbReference>
<dbReference type="InterPro" id="IPR014751">
    <property type="entry name" value="XRCC4-like_C"/>
</dbReference>
<dbReference type="PANTHER" id="PTHR19269">
    <property type="entry name" value="TROPOMYOSIN"/>
    <property type="match status" value="1"/>
</dbReference>
<dbReference type="Pfam" id="PF00261">
    <property type="entry name" value="Tropomyosin"/>
    <property type="match status" value="1"/>
</dbReference>
<dbReference type="PRINTS" id="PR00194">
    <property type="entry name" value="TROPOMYOSIN"/>
</dbReference>
<dbReference type="SUPFAM" id="SSF57997">
    <property type="entry name" value="Tropomyosin"/>
    <property type="match status" value="1"/>
</dbReference>
<dbReference type="PROSITE" id="PS00326">
    <property type="entry name" value="TROPOMYOSIN"/>
    <property type="match status" value="1"/>
</dbReference>
<feature type="initiator methionine" description="Removed" evidence="3">
    <location>
        <position position="1"/>
    </location>
</feature>
<feature type="chain" id="PRO_0000205636" description="Tropomyosin alpha-4 chain">
    <location>
        <begin position="2"/>
        <end position="248"/>
    </location>
</feature>
<feature type="region of interest" description="Disordered" evidence="4">
    <location>
        <begin position="18"/>
        <end position="49"/>
    </location>
</feature>
<feature type="region of interest" description="Disordered" evidence="4">
    <location>
        <begin position="78"/>
        <end position="97"/>
    </location>
</feature>
<feature type="coiled-coil region" evidence="1">
    <location>
        <begin position="2"/>
        <end position="248"/>
    </location>
</feature>
<feature type="compositionally biased region" description="Basic and acidic residues" evidence="4">
    <location>
        <begin position="33"/>
        <end position="47"/>
    </location>
</feature>
<feature type="compositionally biased region" description="Basic and acidic residues" evidence="4">
    <location>
        <begin position="79"/>
        <end position="97"/>
    </location>
</feature>
<feature type="modified residue" description="N-acetylalanine" evidence="3">
    <location>
        <position position="2"/>
    </location>
</feature>
<feature type="modified residue" description="Phosphoserine" evidence="2">
    <location>
        <position position="6"/>
    </location>
</feature>
<feature type="modified residue" description="N6-acetyllysine" evidence="3">
    <location>
        <position position="177"/>
    </location>
</feature>
<feature type="modified residue" description="N6-acetyllysine" evidence="3">
    <location>
        <position position="215"/>
    </location>
</feature>
<feature type="modified residue" description="Phosphothreonine" evidence="3">
    <location>
        <position position="216"/>
    </location>
</feature>
<comment type="function">
    <text evidence="2 3 5">Binds to actin filaments in muscle and non-muscle cells. Plays a central role, in association with the troponin complex, in the calcium dependent regulation of vertebrate striated muscle contraction. Smooth muscle contraction is regulated by interaction with caldesmon. In non-muscle cells is implicated in stabilizing cytoskeleton actin filaments. Binds calcium (By similarity). Plays a role in platelet biogenesis (PubMed:28134622).</text>
</comment>
<comment type="subunit">
    <text evidence="2">Homodimer. Heterodimer of an alpha (TPM1, TPM3 or TPM4) and a beta (TPM2) chain.</text>
</comment>
<comment type="subcellular location">
    <subcellularLocation>
        <location evidence="2">Cytoplasm</location>
        <location evidence="2">Cytoskeleton</location>
    </subcellularLocation>
    <text evidence="2">Associates with F-actin stress fibers.</text>
</comment>
<comment type="domain">
    <text>The molecule is in a coiled coil structure that is formed by 2 polypeptide chains. The sequence exhibits a prominent seven-residues periodicity.</text>
</comment>
<comment type="similarity">
    <text evidence="6">Belongs to the tropomyosin family.</text>
</comment>
<keyword id="KW-0007">Acetylation</keyword>
<keyword id="KW-0009">Actin-binding</keyword>
<keyword id="KW-0106">Calcium</keyword>
<keyword id="KW-0175">Coiled coil</keyword>
<keyword id="KW-0963">Cytoplasm</keyword>
<keyword id="KW-0206">Cytoskeleton</keyword>
<keyword id="KW-0479">Metal-binding</keyword>
<keyword id="KW-0514">Muscle protein</keyword>
<keyword id="KW-0597">Phosphoprotein</keyword>
<keyword id="KW-1185">Reference proteome</keyword>
<evidence type="ECO:0000250" key="1"/>
<evidence type="ECO:0000250" key="2">
    <source>
        <dbReference type="UniProtKB" id="P09495"/>
    </source>
</evidence>
<evidence type="ECO:0000250" key="3">
    <source>
        <dbReference type="UniProtKB" id="P67936"/>
    </source>
</evidence>
<evidence type="ECO:0000256" key="4">
    <source>
        <dbReference type="SAM" id="MobiDB-lite"/>
    </source>
</evidence>
<evidence type="ECO:0000269" key="5">
    <source>
    </source>
</evidence>
<evidence type="ECO:0000305" key="6"/>
<protein>
    <recommendedName>
        <fullName>Tropomyosin alpha-4 chain</fullName>
    </recommendedName>
    <alternativeName>
        <fullName>Tropomyosin-4</fullName>
    </alternativeName>
</protein>
<proteinExistence type="evidence at protein level"/>
<name>TPM4_MOUSE</name>
<organism>
    <name type="scientific">Mus musculus</name>
    <name type="common">Mouse</name>
    <dbReference type="NCBI Taxonomy" id="10090"/>
    <lineage>
        <taxon>Eukaryota</taxon>
        <taxon>Metazoa</taxon>
        <taxon>Chordata</taxon>
        <taxon>Craniata</taxon>
        <taxon>Vertebrata</taxon>
        <taxon>Euteleostomi</taxon>
        <taxon>Mammalia</taxon>
        <taxon>Eutheria</taxon>
        <taxon>Euarchontoglires</taxon>
        <taxon>Glires</taxon>
        <taxon>Rodentia</taxon>
        <taxon>Myomorpha</taxon>
        <taxon>Muroidea</taxon>
        <taxon>Muridae</taxon>
        <taxon>Murinae</taxon>
        <taxon>Mus</taxon>
        <taxon>Mus</taxon>
    </lineage>
</organism>
<gene>
    <name type="primary">Tpm4</name>
</gene>
<sequence>MAGLNSLEAVKRKIQALQQQADDAEDRAQGLQRELDGERERREKAEGDAAALNRRIQLLEEELDRAQEQLATALQNLEEAEKAADESERGMKVIENRAMKDEEKMEILEMQLKEAKHITDEADRKYEEVARKLVILEGELKRAEERAEVSELKCGDLEEELKNVTNNLKSLEAASEKYSEKEDKYEEEIKLLSDKLKEAETRAEFAERTVSKLEKTIDDLEEKLAQAKEENVGLHQTLDQTLNELNCI</sequence>
<reference key="1">
    <citation type="journal article" date="2004" name="Genome Res.">
        <title>The status, quality, and expansion of the NIH full-length cDNA project: the Mammalian Gene Collection (MGC).</title>
        <authorList>
            <consortium name="The MGC Project Team"/>
        </authorList>
    </citation>
    <scope>NUCLEOTIDE SEQUENCE [LARGE SCALE MRNA]</scope>
    <source>
        <strain>C57BL/6J</strain>
        <strain>FVB/N</strain>
        <tissue>Brain</tissue>
        <tissue>Mammary tumor</tissue>
    </source>
</reference>
<reference key="2">
    <citation type="journal article" date="2010" name="Cell">
        <title>A tissue-specific atlas of mouse protein phosphorylation and expression.</title>
        <authorList>
            <person name="Huttlin E.L."/>
            <person name="Jedrychowski M.P."/>
            <person name="Elias J.E."/>
            <person name="Goswami T."/>
            <person name="Rad R."/>
            <person name="Beausoleil S.A."/>
            <person name="Villen J."/>
            <person name="Haas W."/>
            <person name="Sowa M.E."/>
            <person name="Gygi S.P."/>
        </authorList>
    </citation>
    <scope>IDENTIFICATION BY MASS SPECTROMETRY [LARGE SCALE ANALYSIS]</scope>
    <source>
        <tissue>Brain</tissue>
        <tissue>Brown adipose tissue</tissue>
        <tissue>Heart</tissue>
        <tissue>Kidney</tissue>
        <tissue>Liver</tissue>
        <tissue>Lung</tissue>
        <tissue>Pancreas</tissue>
        <tissue>Spleen</tissue>
        <tissue>Testis</tissue>
    </source>
</reference>
<reference key="3">
    <citation type="journal article" date="2017" name="J. Clin. Invest.">
        <title>Mutations in tropomyosin 4 underlie a rare form of human macrothrombocytopenia.</title>
        <authorList>
            <person name="Pleines I."/>
            <person name="Woods J."/>
            <person name="Chappaz S."/>
            <person name="Kew V."/>
            <person name="Foad N."/>
            <person name="Ballester-Beltran J."/>
            <person name="Aurbach K."/>
            <person name="Lincetto C."/>
            <person name="Lane R.M."/>
            <person name="Schevzov G."/>
            <person name="Alexander W.S."/>
            <person name="Hilton D.J."/>
            <person name="Astle W.J."/>
            <person name="Downes K."/>
            <person name="Nurden P."/>
            <person name="Westbury S.K."/>
            <person name="Mumford A.D."/>
            <person name="Obaji S.G."/>
            <person name="Collins P.W."/>
            <person name="Delerue F."/>
            <person name="Ittner L.M."/>
            <person name="Bryce N.S."/>
            <person name="Holliday M."/>
            <person name="Lucas C.A."/>
            <person name="Hardeman E.C."/>
            <person name="Ouwehand W.H."/>
            <person name="Gunning P.W."/>
            <person name="Turro E."/>
            <person name="Tijssen M.R."/>
            <person name="Kile B.T."/>
        </authorList>
    </citation>
    <scope>FUNCTION</scope>
</reference>
<accession>Q6IRU2</accession>